<reference key="1">
    <citation type="journal article" date="2003" name="Proc. Natl. Acad. Sci. U.S.A.">
        <title>Complete genome sequence and analysis of Wolinella succinogenes.</title>
        <authorList>
            <person name="Baar C."/>
            <person name="Eppinger M."/>
            <person name="Raddatz G."/>
            <person name="Simon J."/>
            <person name="Lanz C."/>
            <person name="Klimmek O."/>
            <person name="Nandakumar R."/>
            <person name="Gross R."/>
            <person name="Rosinus A."/>
            <person name="Keller H."/>
            <person name="Jagtap P."/>
            <person name="Linke B."/>
            <person name="Meyer F."/>
            <person name="Lederer H."/>
            <person name="Schuster S.C."/>
        </authorList>
    </citation>
    <scope>NUCLEOTIDE SEQUENCE [LARGE SCALE GENOMIC DNA]</scope>
    <source>
        <strain>ATCC 29543 / DSM 1740 / CCUG 13145 / JCM 31913 / LMG 7466 / NCTC 11488 / FDC 602W</strain>
    </source>
</reference>
<feature type="chain" id="PRO_0000099024" description="Tryptophan synthase beta chain 2">
    <location>
        <begin position="1"/>
        <end position="402"/>
    </location>
</feature>
<feature type="modified residue" description="N6-(pyridoxal phosphate)lysine" evidence="1">
    <location>
        <position position="97"/>
    </location>
</feature>
<protein>
    <recommendedName>
        <fullName>Tryptophan synthase beta chain 2</fullName>
        <ecNumber>4.2.1.20</ecNumber>
    </recommendedName>
</protein>
<name>TRPB2_WOLSU</name>
<gene>
    <name type="primary">trpB2</name>
    <name type="ordered locus">WS1351</name>
</gene>
<keyword id="KW-0028">Amino-acid biosynthesis</keyword>
<keyword id="KW-0057">Aromatic amino acid biosynthesis</keyword>
<keyword id="KW-0456">Lyase</keyword>
<keyword id="KW-0663">Pyridoxal phosphate</keyword>
<keyword id="KW-1185">Reference proteome</keyword>
<keyword id="KW-0822">Tryptophan biosynthesis</keyword>
<proteinExistence type="inferred from homology"/>
<comment type="function">
    <text evidence="1">The beta subunit is responsible for the synthesis of L-tryptophan from indole and L-serine.</text>
</comment>
<comment type="catalytic activity">
    <reaction>
        <text>(1S,2R)-1-C-(indol-3-yl)glycerol 3-phosphate + L-serine = D-glyceraldehyde 3-phosphate + L-tryptophan + H2O</text>
        <dbReference type="Rhea" id="RHEA:10532"/>
        <dbReference type="ChEBI" id="CHEBI:15377"/>
        <dbReference type="ChEBI" id="CHEBI:33384"/>
        <dbReference type="ChEBI" id="CHEBI:57912"/>
        <dbReference type="ChEBI" id="CHEBI:58866"/>
        <dbReference type="ChEBI" id="CHEBI:59776"/>
        <dbReference type="EC" id="4.2.1.20"/>
    </reaction>
</comment>
<comment type="cofactor">
    <cofactor evidence="1">
        <name>pyridoxal 5'-phosphate</name>
        <dbReference type="ChEBI" id="CHEBI:597326"/>
    </cofactor>
</comment>
<comment type="pathway">
    <text>Amino-acid biosynthesis; L-tryptophan biosynthesis; L-tryptophan from chorismate: step 5/5.</text>
</comment>
<comment type="subunit">
    <text evidence="1">Tetramer of two alpha and two beta chains.</text>
</comment>
<comment type="similarity">
    <text evidence="2">Belongs to the TrpB family.</text>
</comment>
<organism>
    <name type="scientific">Wolinella succinogenes (strain ATCC 29543 / DSM 1740 / CCUG 13145 / JCM 31913 / LMG 7466 / NCTC 11488 / FDC 602W)</name>
    <name type="common">Vibrio succinogenes</name>
    <dbReference type="NCBI Taxonomy" id="273121"/>
    <lineage>
        <taxon>Bacteria</taxon>
        <taxon>Pseudomonadati</taxon>
        <taxon>Campylobacterota</taxon>
        <taxon>Epsilonproteobacteria</taxon>
        <taxon>Campylobacterales</taxon>
        <taxon>Helicobacteraceae</taxon>
        <taxon>Wolinella</taxon>
    </lineage>
</organism>
<dbReference type="EC" id="4.2.1.20"/>
<dbReference type="EMBL" id="BX571660">
    <property type="protein sequence ID" value="CAE10422.1"/>
    <property type="molecule type" value="Genomic_DNA"/>
</dbReference>
<dbReference type="SMR" id="Q7M8W7"/>
<dbReference type="STRING" id="273121.WS1351"/>
<dbReference type="KEGG" id="wsu:WS1351"/>
<dbReference type="eggNOG" id="COG0133">
    <property type="taxonomic scope" value="Bacteria"/>
</dbReference>
<dbReference type="HOGENOM" id="CLU_016734_3_1_7"/>
<dbReference type="UniPathway" id="UPA00035">
    <property type="reaction ID" value="UER00044"/>
</dbReference>
<dbReference type="Proteomes" id="UP000000422">
    <property type="component" value="Chromosome"/>
</dbReference>
<dbReference type="GO" id="GO:0005737">
    <property type="term" value="C:cytoplasm"/>
    <property type="evidence" value="ECO:0007669"/>
    <property type="project" value="TreeGrafter"/>
</dbReference>
<dbReference type="GO" id="GO:0004834">
    <property type="term" value="F:tryptophan synthase activity"/>
    <property type="evidence" value="ECO:0007669"/>
    <property type="project" value="UniProtKB-UniRule"/>
</dbReference>
<dbReference type="CDD" id="cd06446">
    <property type="entry name" value="Trp-synth_B"/>
    <property type="match status" value="1"/>
</dbReference>
<dbReference type="FunFam" id="3.40.50.1100:FF:000001">
    <property type="entry name" value="Tryptophan synthase beta chain"/>
    <property type="match status" value="1"/>
</dbReference>
<dbReference type="FunFam" id="3.40.50.1100:FF:000004">
    <property type="entry name" value="Tryptophan synthase beta chain"/>
    <property type="match status" value="1"/>
</dbReference>
<dbReference type="Gene3D" id="3.40.50.1100">
    <property type="match status" value="2"/>
</dbReference>
<dbReference type="HAMAP" id="MF_00133">
    <property type="entry name" value="Trp_synth_beta"/>
    <property type="match status" value="1"/>
</dbReference>
<dbReference type="InterPro" id="IPR006653">
    <property type="entry name" value="Trp_synth_b_CS"/>
</dbReference>
<dbReference type="InterPro" id="IPR006654">
    <property type="entry name" value="Trp_synth_beta"/>
</dbReference>
<dbReference type="InterPro" id="IPR023026">
    <property type="entry name" value="Trp_synth_beta/beta-like"/>
</dbReference>
<dbReference type="InterPro" id="IPR001926">
    <property type="entry name" value="TrpB-like_PALP"/>
</dbReference>
<dbReference type="InterPro" id="IPR036052">
    <property type="entry name" value="TrpB-like_PALP_sf"/>
</dbReference>
<dbReference type="NCBIfam" id="TIGR00263">
    <property type="entry name" value="trpB"/>
    <property type="match status" value="1"/>
</dbReference>
<dbReference type="PANTHER" id="PTHR48077:SF3">
    <property type="entry name" value="TRYPTOPHAN SYNTHASE"/>
    <property type="match status" value="1"/>
</dbReference>
<dbReference type="PANTHER" id="PTHR48077">
    <property type="entry name" value="TRYPTOPHAN SYNTHASE-RELATED"/>
    <property type="match status" value="1"/>
</dbReference>
<dbReference type="Pfam" id="PF00291">
    <property type="entry name" value="PALP"/>
    <property type="match status" value="1"/>
</dbReference>
<dbReference type="PIRSF" id="PIRSF001413">
    <property type="entry name" value="Trp_syn_beta"/>
    <property type="match status" value="1"/>
</dbReference>
<dbReference type="SUPFAM" id="SSF53686">
    <property type="entry name" value="Tryptophan synthase beta subunit-like PLP-dependent enzymes"/>
    <property type="match status" value="1"/>
</dbReference>
<dbReference type="PROSITE" id="PS00168">
    <property type="entry name" value="TRP_SYNTHASE_BETA"/>
    <property type="match status" value="1"/>
</dbReference>
<accession>Q7M8W7</accession>
<sequence>MTMFMPTPSQFDPDERGHFGKFGGRFVPETLMPALLELESAYNELRFDREFWSEVDYYLKEYVGRPSPLYYAERLSDELGAKIYLKREDLNHTGAHKINNTVIQGLLAKRLGKKKIIAETGAGQHGVATATIAALLGLECEVFMGSKDTARQELNVFRMKLLSSKVQSVESGSKTLKDAMNEAIRHWVTHARDTFYIIGTVAGPHPYPMMVRDFQSVISFEAKKQILEKEERLPDYVIACIGGGSNAAGMFARFLDEESVRCIGIEAGGLGIESHHHGASLAKGSPGILHGQMSYLLQDSEGQIEEAYSISAGLDYPGIGPEHAYLFESGAAEYDHVTDAEALEAFVWLSQKEGIIPAFESAHAIAYLKKARERFKDKVVIVSLSGRGDKDMIQAKNLLNFH</sequence>
<evidence type="ECO:0000250" key="1"/>
<evidence type="ECO:0000305" key="2"/>